<accession>Q94AR4</accession>
<accession>O23285</accession>
<accession>Q681X8</accession>
<accession>Q8LBU8</accession>
<comment type="alternative products">
    <event type="alternative splicing"/>
    <isoform>
        <id>Q94AR4-1</id>
        <name>1</name>
        <sequence type="displayed"/>
    </isoform>
    <isoform>
        <id>Q94AR4-2</id>
        <name>2</name>
        <sequence type="described" ref="VSP_037244"/>
    </isoform>
</comment>
<comment type="domain">
    <text>Contains a PAM2-like motif, which seems to be involved in the binding to the PABC/CTC domain of PAB proteins.</text>
</comment>
<comment type="miscellaneous">
    <molecule>Isoform 2</molecule>
    <text evidence="2">May be due to a competing acceptor splice site.</text>
</comment>
<comment type="sequence caution" evidence="2">
    <conflict type="erroneous gene model prediction">
        <sequence resource="EMBL-CDS" id="CAB10206"/>
    </conflict>
    <text>The predicted gene has been split into 3 genes: At4g14270, At4g14272 and At4g14276.</text>
</comment>
<comment type="sequence caution" evidence="2">
    <conflict type="erroneous gene model prediction">
        <sequence resource="EMBL-CDS" id="CAB78469"/>
    </conflict>
    <text>The predicted gene has been split into 3 genes: At4g14270, At4g14272 and At4g14276.</text>
</comment>
<evidence type="ECO:0000303" key="1">
    <source ref="6"/>
</evidence>
<evidence type="ECO:0000305" key="2"/>
<gene>
    <name type="primary">CID2</name>
    <name type="ordered locus">At4g14270</name>
    <name type="ORF">dl3175w</name>
</gene>
<feature type="chain" id="PRO_0000373876" description="Polyadenylate-binding protein-interacting protein 2">
    <location>
        <begin position="1"/>
        <end position="143"/>
    </location>
</feature>
<feature type="short sequence motif" description="PAM2-like">
    <location>
        <begin position="11"/>
        <end position="21"/>
    </location>
</feature>
<feature type="splice variant" id="VSP_037244" description="In isoform 2." evidence="1">
    <location>
        <begin position="88"/>
        <end position="89"/>
    </location>
</feature>
<feature type="sequence conflict" description="In Ref. 7; AAM64545." evidence="2" ref="7">
    <original>N</original>
    <variation>Y</variation>
    <location>
        <position position="55"/>
    </location>
</feature>
<feature type="sequence conflict" description="In Ref. 7; AAM64545." evidence="2" ref="7">
    <location>
        <position position="72"/>
    </location>
</feature>
<dbReference type="EMBL" id="Z97335">
    <property type="protein sequence ID" value="CAB10206.1"/>
    <property type="status" value="ALT_SEQ"/>
    <property type="molecule type" value="Genomic_DNA"/>
</dbReference>
<dbReference type="EMBL" id="AL161538">
    <property type="protein sequence ID" value="CAB78469.1"/>
    <property type="status" value="ALT_SEQ"/>
    <property type="molecule type" value="Genomic_DNA"/>
</dbReference>
<dbReference type="EMBL" id="CP002687">
    <property type="protein sequence ID" value="AEE83405.1"/>
    <property type="molecule type" value="Genomic_DNA"/>
</dbReference>
<dbReference type="EMBL" id="CP002687">
    <property type="protein sequence ID" value="AEE83406.2"/>
    <property type="molecule type" value="Genomic_DNA"/>
</dbReference>
<dbReference type="EMBL" id="AK118928">
    <property type="protein sequence ID" value="BAC43509.1"/>
    <property type="molecule type" value="mRNA"/>
</dbReference>
<dbReference type="EMBL" id="AY045858">
    <property type="protein sequence ID" value="AAK76532.1"/>
    <property type="molecule type" value="mRNA"/>
</dbReference>
<dbReference type="EMBL" id="AY091384">
    <property type="protein sequence ID" value="AAM14323.1"/>
    <property type="molecule type" value="mRNA"/>
</dbReference>
<dbReference type="EMBL" id="AK175142">
    <property type="protein sequence ID" value="BAD42905.1"/>
    <property type="molecule type" value="mRNA"/>
</dbReference>
<dbReference type="EMBL" id="AK175550">
    <property type="protein sequence ID" value="BAD43313.1"/>
    <property type="molecule type" value="mRNA"/>
</dbReference>
<dbReference type="EMBL" id="AK176046">
    <property type="protein sequence ID" value="BAD43809.1"/>
    <property type="molecule type" value="mRNA"/>
</dbReference>
<dbReference type="EMBL" id="AK176534">
    <property type="protein sequence ID" value="BAD44297.1"/>
    <property type="molecule type" value="mRNA"/>
</dbReference>
<dbReference type="EMBL" id="AK176574">
    <property type="protein sequence ID" value="BAD44337.1"/>
    <property type="molecule type" value="mRNA"/>
</dbReference>
<dbReference type="EMBL" id="AK176876">
    <property type="protein sequence ID" value="BAD44639.1"/>
    <property type="molecule type" value="mRNA"/>
</dbReference>
<dbReference type="EMBL" id="AK175489">
    <property type="protein sequence ID" value="BAD43252.1"/>
    <property type="molecule type" value="mRNA"/>
</dbReference>
<dbReference type="EMBL" id="AY086984">
    <property type="protein sequence ID" value="AAM64545.1"/>
    <property type="molecule type" value="mRNA"/>
</dbReference>
<dbReference type="RefSeq" id="NP_001319936.1">
    <molecule id="Q94AR4-1"/>
    <property type="nucleotide sequence ID" value="NM_001340912.1"/>
</dbReference>
<dbReference type="RefSeq" id="NP_567425.1">
    <molecule id="Q94AR4-1"/>
    <property type="nucleotide sequence ID" value="NM_117504.3"/>
</dbReference>
<dbReference type="BioGRID" id="12365">
    <property type="interactions" value="2"/>
</dbReference>
<dbReference type="FunCoup" id="Q94AR4">
    <property type="interactions" value="1"/>
</dbReference>
<dbReference type="IntAct" id="Q94AR4">
    <property type="interactions" value="2"/>
</dbReference>
<dbReference type="STRING" id="3702.Q94AR4"/>
<dbReference type="iPTMnet" id="Q94AR4"/>
<dbReference type="PaxDb" id="3702-AT4G14270.1"/>
<dbReference type="ProteomicsDB" id="246940">
    <molecule id="Q94AR4-1"/>
</dbReference>
<dbReference type="DNASU" id="827068"/>
<dbReference type="EnsemblPlants" id="AT4G14270.1">
    <molecule id="Q94AR4-1"/>
    <property type="protein sequence ID" value="AT4G14270.1"/>
    <property type="gene ID" value="AT4G14270"/>
</dbReference>
<dbReference type="EnsemblPlants" id="AT4G14270.2">
    <molecule id="Q94AR4-1"/>
    <property type="protein sequence ID" value="AT4G14270.2"/>
    <property type="gene ID" value="AT4G14270"/>
</dbReference>
<dbReference type="GeneID" id="827068"/>
<dbReference type="Gramene" id="AT4G14270.1">
    <molecule id="Q94AR4-1"/>
    <property type="protein sequence ID" value="AT4G14270.1"/>
    <property type="gene ID" value="AT4G14270"/>
</dbReference>
<dbReference type="Gramene" id="AT4G14270.2">
    <molecule id="Q94AR4-1"/>
    <property type="protein sequence ID" value="AT4G14270.2"/>
    <property type="gene ID" value="AT4G14270"/>
</dbReference>
<dbReference type="KEGG" id="ath:AT4G14270"/>
<dbReference type="Araport" id="AT4G14270"/>
<dbReference type="TAIR" id="AT4G14270"/>
<dbReference type="eggNOG" id="ENOG502R3AA">
    <property type="taxonomic scope" value="Eukaryota"/>
</dbReference>
<dbReference type="InParanoid" id="Q94AR4"/>
<dbReference type="OMA" id="SYNSEYD"/>
<dbReference type="PhylomeDB" id="Q94AR4"/>
<dbReference type="PRO" id="PR:Q94AR4"/>
<dbReference type="Proteomes" id="UP000006548">
    <property type="component" value="Chromosome 4"/>
</dbReference>
<dbReference type="ExpressionAtlas" id="Q94AR4">
    <property type="expression patterns" value="baseline and differential"/>
</dbReference>
<dbReference type="InterPro" id="IPR040414">
    <property type="entry name" value="CID1/CID2"/>
</dbReference>
<dbReference type="PANTHER" id="PTHR33790">
    <property type="entry name" value="OS05G0344200 PROTEIN"/>
    <property type="match status" value="1"/>
</dbReference>
<dbReference type="PANTHER" id="PTHR33790:SF9">
    <property type="entry name" value="POLYADENYLATE-BINDING PROTEIN-INTERACTING PROTEIN 2"/>
    <property type="match status" value="1"/>
</dbReference>
<name>CID2_ARATH</name>
<proteinExistence type="evidence at transcript level"/>
<keyword id="KW-0025">Alternative splicing</keyword>
<keyword id="KW-1185">Reference proteome</keyword>
<sequence>MTATIDRRLSTLNPNAPVFDPVEFREVEDFSPKWWDLVTTSKWFRDFWLSANSENEFLGGDDFSVMEEEFEEMIASSDGGSMADTVTEADVASYLKMLLNIAESTKEKIYRSKVSSCSPKYNQKKYMNPNFNCRRNHHIYQPR</sequence>
<organism>
    <name type="scientific">Arabidopsis thaliana</name>
    <name type="common">Mouse-ear cress</name>
    <dbReference type="NCBI Taxonomy" id="3702"/>
    <lineage>
        <taxon>Eukaryota</taxon>
        <taxon>Viridiplantae</taxon>
        <taxon>Streptophyta</taxon>
        <taxon>Embryophyta</taxon>
        <taxon>Tracheophyta</taxon>
        <taxon>Spermatophyta</taxon>
        <taxon>Magnoliopsida</taxon>
        <taxon>eudicotyledons</taxon>
        <taxon>Gunneridae</taxon>
        <taxon>Pentapetalae</taxon>
        <taxon>rosids</taxon>
        <taxon>malvids</taxon>
        <taxon>Brassicales</taxon>
        <taxon>Brassicaceae</taxon>
        <taxon>Camelineae</taxon>
        <taxon>Arabidopsis</taxon>
    </lineage>
</organism>
<reference key="1">
    <citation type="journal article" date="1998" name="Nature">
        <title>Analysis of 1.9 Mb of contiguous sequence from chromosome 4 of Arabidopsis thaliana.</title>
        <authorList>
            <person name="Bevan M."/>
            <person name="Bancroft I."/>
            <person name="Bent E."/>
            <person name="Love K."/>
            <person name="Goodman H.M."/>
            <person name="Dean C."/>
            <person name="Bergkamp R."/>
            <person name="Dirkse W."/>
            <person name="van Staveren M."/>
            <person name="Stiekema W."/>
            <person name="Drost L."/>
            <person name="Ridley P."/>
            <person name="Hudson S.-A."/>
            <person name="Patel K."/>
            <person name="Murphy G."/>
            <person name="Piffanelli P."/>
            <person name="Wedler H."/>
            <person name="Wedler E."/>
            <person name="Wambutt R."/>
            <person name="Weitzenegger T."/>
            <person name="Pohl T."/>
            <person name="Terryn N."/>
            <person name="Gielen J."/>
            <person name="Villarroel R."/>
            <person name="De Clercq R."/>
            <person name="van Montagu M."/>
            <person name="Lecharny A."/>
            <person name="Aubourg S."/>
            <person name="Gy I."/>
            <person name="Kreis M."/>
            <person name="Lao N."/>
            <person name="Kavanagh T."/>
            <person name="Hempel S."/>
            <person name="Kotter P."/>
            <person name="Entian K.-D."/>
            <person name="Rieger M."/>
            <person name="Schaefer M."/>
            <person name="Funk B."/>
            <person name="Mueller-Auer S."/>
            <person name="Silvey M."/>
            <person name="James R."/>
            <person name="Monfort A."/>
            <person name="Pons A."/>
            <person name="Puigdomenech P."/>
            <person name="Douka A."/>
            <person name="Voukelatou E."/>
            <person name="Milioni D."/>
            <person name="Hatzopoulos P."/>
            <person name="Piravandi E."/>
            <person name="Obermaier B."/>
            <person name="Hilbert H."/>
            <person name="Duesterhoeft A."/>
            <person name="Moores T."/>
            <person name="Jones J.D.G."/>
            <person name="Eneva T."/>
            <person name="Palme K."/>
            <person name="Benes V."/>
            <person name="Rechmann S."/>
            <person name="Ansorge W."/>
            <person name="Cooke R."/>
            <person name="Berger C."/>
            <person name="Delseny M."/>
            <person name="Voet M."/>
            <person name="Volckaert G."/>
            <person name="Mewes H.-W."/>
            <person name="Klosterman S."/>
            <person name="Schueller C."/>
            <person name="Chalwatzis N."/>
        </authorList>
    </citation>
    <scope>NUCLEOTIDE SEQUENCE [LARGE SCALE GENOMIC DNA]</scope>
    <source>
        <strain>cv. Columbia</strain>
    </source>
</reference>
<reference key="2">
    <citation type="journal article" date="1999" name="Nature">
        <title>Sequence and analysis of chromosome 4 of the plant Arabidopsis thaliana.</title>
        <authorList>
            <person name="Mayer K.F.X."/>
            <person name="Schueller C."/>
            <person name="Wambutt R."/>
            <person name="Murphy G."/>
            <person name="Volckaert G."/>
            <person name="Pohl T."/>
            <person name="Duesterhoeft A."/>
            <person name="Stiekema W."/>
            <person name="Entian K.-D."/>
            <person name="Terryn N."/>
            <person name="Harris B."/>
            <person name="Ansorge W."/>
            <person name="Brandt P."/>
            <person name="Grivell L.A."/>
            <person name="Rieger M."/>
            <person name="Weichselgartner M."/>
            <person name="de Simone V."/>
            <person name="Obermaier B."/>
            <person name="Mache R."/>
            <person name="Mueller M."/>
            <person name="Kreis M."/>
            <person name="Delseny M."/>
            <person name="Puigdomenech P."/>
            <person name="Watson M."/>
            <person name="Schmidtheini T."/>
            <person name="Reichert B."/>
            <person name="Portetelle D."/>
            <person name="Perez-Alonso M."/>
            <person name="Boutry M."/>
            <person name="Bancroft I."/>
            <person name="Vos P."/>
            <person name="Hoheisel J."/>
            <person name="Zimmermann W."/>
            <person name="Wedler H."/>
            <person name="Ridley P."/>
            <person name="Langham S.-A."/>
            <person name="McCullagh B."/>
            <person name="Bilham L."/>
            <person name="Robben J."/>
            <person name="van der Schueren J."/>
            <person name="Grymonprez B."/>
            <person name="Chuang Y.-J."/>
            <person name="Vandenbussche F."/>
            <person name="Braeken M."/>
            <person name="Weltjens I."/>
            <person name="Voet M."/>
            <person name="Bastiaens I."/>
            <person name="Aert R."/>
            <person name="Defoor E."/>
            <person name="Weitzenegger T."/>
            <person name="Bothe G."/>
            <person name="Ramsperger U."/>
            <person name="Hilbert H."/>
            <person name="Braun M."/>
            <person name="Holzer E."/>
            <person name="Brandt A."/>
            <person name="Peters S."/>
            <person name="van Staveren M."/>
            <person name="Dirkse W."/>
            <person name="Mooijman P."/>
            <person name="Klein Lankhorst R."/>
            <person name="Rose M."/>
            <person name="Hauf J."/>
            <person name="Koetter P."/>
            <person name="Berneiser S."/>
            <person name="Hempel S."/>
            <person name="Feldpausch M."/>
            <person name="Lamberth S."/>
            <person name="Van den Daele H."/>
            <person name="De Keyser A."/>
            <person name="Buysshaert C."/>
            <person name="Gielen J."/>
            <person name="Villarroel R."/>
            <person name="De Clercq R."/>
            <person name="van Montagu M."/>
            <person name="Rogers J."/>
            <person name="Cronin A."/>
            <person name="Quail M.A."/>
            <person name="Bray-Allen S."/>
            <person name="Clark L."/>
            <person name="Doggett J."/>
            <person name="Hall S."/>
            <person name="Kay M."/>
            <person name="Lennard N."/>
            <person name="McLay K."/>
            <person name="Mayes R."/>
            <person name="Pettett A."/>
            <person name="Rajandream M.A."/>
            <person name="Lyne M."/>
            <person name="Benes V."/>
            <person name="Rechmann S."/>
            <person name="Borkova D."/>
            <person name="Bloecker H."/>
            <person name="Scharfe M."/>
            <person name="Grimm M."/>
            <person name="Loehnert T.-H."/>
            <person name="Dose S."/>
            <person name="de Haan M."/>
            <person name="Maarse A.C."/>
            <person name="Schaefer M."/>
            <person name="Mueller-Auer S."/>
            <person name="Gabel C."/>
            <person name="Fuchs M."/>
            <person name="Fartmann B."/>
            <person name="Granderath K."/>
            <person name="Dauner D."/>
            <person name="Herzl A."/>
            <person name="Neumann S."/>
            <person name="Argiriou A."/>
            <person name="Vitale D."/>
            <person name="Liguori R."/>
            <person name="Piravandi E."/>
            <person name="Massenet O."/>
            <person name="Quigley F."/>
            <person name="Clabauld G."/>
            <person name="Muendlein A."/>
            <person name="Felber R."/>
            <person name="Schnabl S."/>
            <person name="Hiller R."/>
            <person name="Schmidt W."/>
            <person name="Lecharny A."/>
            <person name="Aubourg S."/>
            <person name="Chefdor F."/>
            <person name="Cooke R."/>
            <person name="Berger C."/>
            <person name="Monfort A."/>
            <person name="Casacuberta E."/>
            <person name="Gibbons T."/>
            <person name="Weber N."/>
            <person name="Vandenbol M."/>
            <person name="Bargues M."/>
            <person name="Terol J."/>
            <person name="Torres A."/>
            <person name="Perez-Perez A."/>
            <person name="Purnelle B."/>
            <person name="Bent E."/>
            <person name="Johnson S."/>
            <person name="Tacon D."/>
            <person name="Jesse T."/>
            <person name="Heijnen L."/>
            <person name="Schwarz S."/>
            <person name="Scholler P."/>
            <person name="Heber S."/>
            <person name="Francs P."/>
            <person name="Bielke C."/>
            <person name="Frishman D."/>
            <person name="Haase D."/>
            <person name="Lemcke K."/>
            <person name="Mewes H.-W."/>
            <person name="Stocker S."/>
            <person name="Zaccaria P."/>
            <person name="Bevan M."/>
            <person name="Wilson R.K."/>
            <person name="de la Bastide M."/>
            <person name="Habermann K."/>
            <person name="Parnell L."/>
            <person name="Dedhia N."/>
            <person name="Gnoj L."/>
            <person name="Schutz K."/>
            <person name="Huang E."/>
            <person name="Spiegel L."/>
            <person name="Sekhon M."/>
            <person name="Murray J."/>
            <person name="Sheet P."/>
            <person name="Cordes M."/>
            <person name="Abu-Threideh J."/>
            <person name="Stoneking T."/>
            <person name="Kalicki J."/>
            <person name="Graves T."/>
            <person name="Harmon G."/>
            <person name="Edwards J."/>
            <person name="Latreille P."/>
            <person name="Courtney L."/>
            <person name="Cloud J."/>
            <person name="Abbott A."/>
            <person name="Scott K."/>
            <person name="Johnson D."/>
            <person name="Minx P."/>
            <person name="Bentley D."/>
            <person name="Fulton B."/>
            <person name="Miller N."/>
            <person name="Greco T."/>
            <person name="Kemp K."/>
            <person name="Kramer J."/>
            <person name="Fulton L."/>
            <person name="Mardis E."/>
            <person name="Dante M."/>
            <person name="Pepin K."/>
            <person name="Hillier L.W."/>
            <person name="Nelson J."/>
            <person name="Spieth J."/>
            <person name="Ryan E."/>
            <person name="Andrews S."/>
            <person name="Geisel C."/>
            <person name="Layman D."/>
            <person name="Du H."/>
            <person name="Ali J."/>
            <person name="Berghoff A."/>
            <person name="Jones K."/>
            <person name="Drone K."/>
            <person name="Cotton M."/>
            <person name="Joshu C."/>
            <person name="Antonoiu B."/>
            <person name="Zidanic M."/>
            <person name="Strong C."/>
            <person name="Sun H."/>
            <person name="Lamar B."/>
            <person name="Yordan C."/>
            <person name="Ma P."/>
            <person name="Zhong J."/>
            <person name="Preston R."/>
            <person name="Vil D."/>
            <person name="Shekher M."/>
            <person name="Matero A."/>
            <person name="Shah R."/>
            <person name="Swaby I.K."/>
            <person name="O'Shaughnessy A."/>
            <person name="Rodriguez M."/>
            <person name="Hoffman J."/>
            <person name="Till S."/>
            <person name="Granat S."/>
            <person name="Shohdy N."/>
            <person name="Hasegawa A."/>
            <person name="Hameed A."/>
            <person name="Lodhi M."/>
            <person name="Johnson A."/>
            <person name="Chen E."/>
            <person name="Marra M.A."/>
            <person name="Martienssen R."/>
            <person name="McCombie W.R."/>
        </authorList>
    </citation>
    <scope>NUCLEOTIDE SEQUENCE [LARGE SCALE GENOMIC DNA]</scope>
    <source>
        <strain>cv. Columbia</strain>
    </source>
</reference>
<reference key="3">
    <citation type="journal article" date="2017" name="Plant J.">
        <title>Araport11: a complete reannotation of the Arabidopsis thaliana reference genome.</title>
        <authorList>
            <person name="Cheng C.Y."/>
            <person name="Krishnakumar V."/>
            <person name="Chan A.P."/>
            <person name="Thibaud-Nissen F."/>
            <person name="Schobel S."/>
            <person name="Town C.D."/>
        </authorList>
    </citation>
    <scope>GENOME REANNOTATION</scope>
    <source>
        <strain>cv. Columbia</strain>
    </source>
</reference>
<reference key="4">
    <citation type="journal article" date="2002" name="Science">
        <title>Functional annotation of a full-length Arabidopsis cDNA collection.</title>
        <authorList>
            <person name="Seki M."/>
            <person name="Narusaka M."/>
            <person name="Kamiya A."/>
            <person name="Ishida J."/>
            <person name="Satou M."/>
            <person name="Sakurai T."/>
            <person name="Nakajima M."/>
            <person name="Enju A."/>
            <person name="Akiyama K."/>
            <person name="Oono Y."/>
            <person name="Muramatsu M."/>
            <person name="Hayashizaki Y."/>
            <person name="Kawai J."/>
            <person name="Carninci P."/>
            <person name="Itoh M."/>
            <person name="Ishii Y."/>
            <person name="Arakawa T."/>
            <person name="Shibata K."/>
            <person name="Shinagawa A."/>
            <person name="Shinozaki K."/>
        </authorList>
    </citation>
    <scope>NUCLEOTIDE SEQUENCE [LARGE SCALE MRNA] (ISOFORM 1)</scope>
    <source>
        <strain>cv. Columbia</strain>
    </source>
</reference>
<reference key="5">
    <citation type="journal article" date="2003" name="Science">
        <title>Empirical analysis of transcriptional activity in the Arabidopsis genome.</title>
        <authorList>
            <person name="Yamada K."/>
            <person name="Lim J."/>
            <person name="Dale J.M."/>
            <person name="Chen H."/>
            <person name="Shinn P."/>
            <person name="Palm C.J."/>
            <person name="Southwick A.M."/>
            <person name="Wu H.C."/>
            <person name="Kim C.J."/>
            <person name="Nguyen M."/>
            <person name="Pham P.K."/>
            <person name="Cheuk R.F."/>
            <person name="Karlin-Newmann G."/>
            <person name="Liu S.X."/>
            <person name="Lam B."/>
            <person name="Sakano H."/>
            <person name="Wu T."/>
            <person name="Yu G."/>
            <person name="Miranda M."/>
            <person name="Quach H.L."/>
            <person name="Tripp M."/>
            <person name="Chang C.H."/>
            <person name="Lee J.M."/>
            <person name="Toriumi M.J."/>
            <person name="Chan M.M."/>
            <person name="Tang C.C."/>
            <person name="Onodera C.S."/>
            <person name="Deng J.M."/>
            <person name="Akiyama K."/>
            <person name="Ansari Y."/>
            <person name="Arakawa T."/>
            <person name="Banh J."/>
            <person name="Banno F."/>
            <person name="Bowser L."/>
            <person name="Brooks S.Y."/>
            <person name="Carninci P."/>
            <person name="Chao Q."/>
            <person name="Choy N."/>
            <person name="Enju A."/>
            <person name="Goldsmith A.D."/>
            <person name="Gurjal M."/>
            <person name="Hansen N.F."/>
            <person name="Hayashizaki Y."/>
            <person name="Johnson-Hopson C."/>
            <person name="Hsuan V.W."/>
            <person name="Iida K."/>
            <person name="Karnes M."/>
            <person name="Khan S."/>
            <person name="Koesema E."/>
            <person name="Ishida J."/>
            <person name="Jiang P.X."/>
            <person name="Jones T."/>
            <person name="Kawai J."/>
            <person name="Kamiya A."/>
            <person name="Meyers C."/>
            <person name="Nakajima M."/>
            <person name="Narusaka M."/>
            <person name="Seki M."/>
            <person name="Sakurai T."/>
            <person name="Satou M."/>
            <person name="Tamse R."/>
            <person name="Vaysberg M."/>
            <person name="Wallender E.K."/>
            <person name="Wong C."/>
            <person name="Yamamura Y."/>
            <person name="Yuan S."/>
            <person name="Shinozaki K."/>
            <person name="Davis R.W."/>
            <person name="Theologis A."/>
            <person name="Ecker J.R."/>
        </authorList>
    </citation>
    <scope>NUCLEOTIDE SEQUENCE [LARGE SCALE MRNA] (ISOFORM 1)</scope>
    <source>
        <strain>cv. Columbia</strain>
    </source>
</reference>
<reference key="6">
    <citation type="submission" date="2004-09" db="EMBL/GenBank/DDBJ databases">
        <title>Large-scale analysis of RIKEN Arabidopsis full-length (RAFL) cDNAs.</title>
        <authorList>
            <person name="Totoki Y."/>
            <person name="Seki M."/>
            <person name="Ishida J."/>
            <person name="Nakajima M."/>
            <person name="Enju A."/>
            <person name="Kamiya A."/>
            <person name="Narusaka M."/>
            <person name="Shin-i T."/>
            <person name="Nakagawa M."/>
            <person name="Sakamoto N."/>
            <person name="Oishi K."/>
            <person name="Kohara Y."/>
            <person name="Kobayashi M."/>
            <person name="Toyoda A."/>
            <person name="Sakaki Y."/>
            <person name="Sakurai T."/>
            <person name="Iida K."/>
            <person name="Akiyama K."/>
            <person name="Satou M."/>
            <person name="Toyoda T."/>
            <person name="Konagaya A."/>
            <person name="Carninci P."/>
            <person name="Kawai J."/>
            <person name="Hayashizaki Y."/>
            <person name="Shinozaki K."/>
        </authorList>
    </citation>
    <scope>NUCLEOTIDE SEQUENCE [LARGE SCALE MRNA] (ISOFORMS 1 AND 2)</scope>
    <source>
        <strain>cv. Columbia</strain>
    </source>
</reference>
<reference key="7">
    <citation type="submission" date="2002-03" db="EMBL/GenBank/DDBJ databases">
        <title>Full-length cDNA from Arabidopsis thaliana.</title>
        <authorList>
            <person name="Brover V.V."/>
            <person name="Troukhan M.E."/>
            <person name="Alexandrov N.A."/>
            <person name="Lu Y.-P."/>
            <person name="Flavell R.B."/>
            <person name="Feldmann K.A."/>
        </authorList>
    </citation>
    <scope>NUCLEOTIDE SEQUENCE [LARGE SCALE MRNA] (ISOFORM 1)</scope>
</reference>
<reference key="8">
    <citation type="journal article" date="2005" name="Mol. Genet. Genomics">
        <title>Four distinct classes of proteins as interaction partners of the PABC domain of Arabidopsis thaliana Poly(A)-binding proteins.</title>
        <authorList>
            <person name="Bravo J."/>
            <person name="Aguilar-Henonin L."/>
            <person name="Olmedo G."/>
            <person name="Guzman P."/>
        </authorList>
    </citation>
    <scope>GENE FAMILY</scope>
    <scope>PAM2 MOTIF</scope>
</reference>
<protein>
    <recommendedName>
        <fullName>Polyadenylate-binding protein-interacting protein 2</fullName>
        <shortName>PABP-interacting protein 2</shortName>
        <shortName>Poly(A)-binding protein-interacting protein 2</shortName>
    </recommendedName>
    <alternativeName>
        <fullName>PAM2-containing protein CID2</fullName>
    </alternativeName>
    <alternativeName>
        <fullName>Protein CTC-INTERACTING DOMAIN 2</fullName>
    </alternativeName>
</protein>